<evidence type="ECO:0000255" key="1"/>
<evidence type="ECO:0000255" key="2">
    <source>
        <dbReference type="HAMAP-Rule" id="MF_01895"/>
    </source>
</evidence>
<evidence type="ECO:0000256" key="3">
    <source>
        <dbReference type="SAM" id="MobiDB-lite"/>
    </source>
</evidence>
<dbReference type="EC" id="3.1.13.1" evidence="2"/>
<dbReference type="EMBL" id="AE001363">
    <property type="protein sequence ID" value="AAD18644.1"/>
    <property type="molecule type" value="Genomic_DNA"/>
</dbReference>
<dbReference type="EMBL" id="AE002161">
    <property type="protein sequence ID" value="AAF73648.1"/>
    <property type="molecule type" value="Genomic_DNA"/>
</dbReference>
<dbReference type="EMBL" id="BA000008">
    <property type="protein sequence ID" value="BAA98710.1"/>
    <property type="molecule type" value="Genomic_DNA"/>
</dbReference>
<dbReference type="EMBL" id="AE009440">
    <property type="protein sequence ID" value="AAP98454.1"/>
    <property type="molecule type" value="Genomic_DNA"/>
</dbReference>
<dbReference type="PIR" id="B72071">
    <property type="entry name" value="B72071"/>
</dbReference>
<dbReference type="PIR" id="D86553">
    <property type="entry name" value="D86553"/>
</dbReference>
<dbReference type="RefSeq" id="NP_224700.1">
    <property type="nucleotide sequence ID" value="NC_000922.1"/>
</dbReference>
<dbReference type="RefSeq" id="WP_010883142.1">
    <property type="nucleotide sequence ID" value="NZ_LN847257.1"/>
</dbReference>
<dbReference type="SMR" id="Q9Z848"/>
<dbReference type="STRING" id="406984.CPK_ORF01020"/>
<dbReference type="GeneID" id="45050547"/>
<dbReference type="KEGG" id="cpa:CP_0249"/>
<dbReference type="KEGG" id="cpj:vacB"/>
<dbReference type="KEGG" id="cpn:CPn_0504"/>
<dbReference type="KEGG" id="cpt:CpB0525"/>
<dbReference type="PATRIC" id="fig|115713.3.peg.563"/>
<dbReference type="eggNOG" id="COG0557">
    <property type="taxonomic scope" value="Bacteria"/>
</dbReference>
<dbReference type="HOGENOM" id="CLU_002333_7_3_0"/>
<dbReference type="OrthoDB" id="9764149at2"/>
<dbReference type="Proteomes" id="UP000000583">
    <property type="component" value="Chromosome"/>
</dbReference>
<dbReference type="Proteomes" id="UP000000801">
    <property type="component" value="Chromosome"/>
</dbReference>
<dbReference type="GO" id="GO:0005829">
    <property type="term" value="C:cytosol"/>
    <property type="evidence" value="ECO:0007669"/>
    <property type="project" value="TreeGrafter"/>
</dbReference>
<dbReference type="GO" id="GO:0008859">
    <property type="term" value="F:exoribonuclease II activity"/>
    <property type="evidence" value="ECO:0007669"/>
    <property type="project" value="UniProtKB-UniRule"/>
</dbReference>
<dbReference type="GO" id="GO:0003723">
    <property type="term" value="F:RNA binding"/>
    <property type="evidence" value="ECO:0007669"/>
    <property type="project" value="UniProtKB-UniRule"/>
</dbReference>
<dbReference type="GO" id="GO:0006402">
    <property type="term" value="P:mRNA catabolic process"/>
    <property type="evidence" value="ECO:0007669"/>
    <property type="project" value="TreeGrafter"/>
</dbReference>
<dbReference type="Gene3D" id="2.40.50.140">
    <property type="entry name" value="Nucleic acid-binding proteins"/>
    <property type="match status" value="1"/>
</dbReference>
<dbReference type="HAMAP" id="MF_01895">
    <property type="entry name" value="RNase_R"/>
    <property type="match status" value="1"/>
</dbReference>
<dbReference type="InterPro" id="IPR011129">
    <property type="entry name" value="CSD"/>
</dbReference>
<dbReference type="InterPro" id="IPR012340">
    <property type="entry name" value="NA-bd_OB-fold"/>
</dbReference>
<dbReference type="InterPro" id="IPR013223">
    <property type="entry name" value="RNase_B_OB_dom"/>
</dbReference>
<dbReference type="InterPro" id="IPR001900">
    <property type="entry name" value="RNase_II/R"/>
</dbReference>
<dbReference type="InterPro" id="IPR022966">
    <property type="entry name" value="RNase_II/R_CS"/>
</dbReference>
<dbReference type="InterPro" id="IPR004476">
    <property type="entry name" value="RNase_II/RNase_R"/>
</dbReference>
<dbReference type="InterPro" id="IPR011805">
    <property type="entry name" value="RNase_R"/>
</dbReference>
<dbReference type="InterPro" id="IPR050180">
    <property type="entry name" value="RNR_Ribonuclease"/>
</dbReference>
<dbReference type="NCBIfam" id="TIGR00358">
    <property type="entry name" value="3_prime_RNase"/>
    <property type="match status" value="1"/>
</dbReference>
<dbReference type="PANTHER" id="PTHR23355:SF9">
    <property type="entry name" value="DIS3-LIKE EXONUCLEASE 2"/>
    <property type="match status" value="1"/>
</dbReference>
<dbReference type="PANTHER" id="PTHR23355">
    <property type="entry name" value="RIBONUCLEASE"/>
    <property type="match status" value="1"/>
</dbReference>
<dbReference type="Pfam" id="PF08206">
    <property type="entry name" value="OB_RNB"/>
    <property type="match status" value="1"/>
</dbReference>
<dbReference type="Pfam" id="PF00773">
    <property type="entry name" value="RNB"/>
    <property type="match status" value="1"/>
</dbReference>
<dbReference type="SMART" id="SM00357">
    <property type="entry name" value="CSP"/>
    <property type="match status" value="1"/>
</dbReference>
<dbReference type="SMART" id="SM00955">
    <property type="entry name" value="RNB"/>
    <property type="match status" value="1"/>
</dbReference>
<dbReference type="SUPFAM" id="SSF50249">
    <property type="entry name" value="Nucleic acid-binding proteins"/>
    <property type="match status" value="2"/>
</dbReference>
<dbReference type="PROSITE" id="PS01175">
    <property type="entry name" value="RIBONUCLEASE_II"/>
    <property type="match status" value="1"/>
</dbReference>
<accession>Q9Z848</accession>
<accession>Q9JQ39</accession>
<name>RNR_CHLPN</name>
<keyword id="KW-0963">Cytoplasm</keyword>
<keyword id="KW-0269">Exonuclease</keyword>
<keyword id="KW-0378">Hydrolase</keyword>
<keyword id="KW-0540">Nuclease</keyword>
<keyword id="KW-0694">RNA-binding</keyword>
<gene>
    <name evidence="2" type="primary">rnr</name>
    <name type="synonym">vacB</name>
    <name type="ordered locus">CPn_0504</name>
    <name type="ordered locus">CP_0249</name>
    <name type="ordered locus">CpB0525</name>
</gene>
<reference key="1">
    <citation type="journal article" date="1999" name="Nat. Genet.">
        <title>Comparative genomes of Chlamydia pneumoniae and C. trachomatis.</title>
        <authorList>
            <person name="Kalman S."/>
            <person name="Mitchell W.P."/>
            <person name="Marathe R."/>
            <person name="Lammel C.J."/>
            <person name="Fan J."/>
            <person name="Hyman R.W."/>
            <person name="Olinger L."/>
            <person name="Grimwood J."/>
            <person name="Davis R.W."/>
            <person name="Stephens R.S."/>
        </authorList>
    </citation>
    <scope>NUCLEOTIDE SEQUENCE [LARGE SCALE GENOMIC DNA]</scope>
    <source>
        <strain>CWL029</strain>
    </source>
</reference>
<reference key="2">
    <citation type="journal article" date="2000" name="Nucleic Acids Res.">
        <title>Genome sequences of Chlamydia trachomatis MoPn and Chlamydia pneumoniae AR39.</title>
        <authorList>
            <person name="Read T.D."/>
            <person name="Brunham R.C."/>
            <person name="Shen C."/>
            <person name="Gill S.R."/>
            <person name="Heidelberg J.F."/>
            <person name="White O."/>
            <person name="Hickey E.K."/>
            <person name="Peterson J.D."/>
            <person name="Utterback T.R."/>
            <person name="Berry K.J."/>
            <person name="Bass S."/>
            <person name="Linher K.D."/>
            <person name="Weidman J.F."/>
            <person name="Khouri H.M."/>
            <person name="Craven B."/>
            <person name="Bowman C."/>
            <person name="Dodson R.J."/>
            <person name="Gwinn M.L."/>
            <person name="Nelson W.C."/>
            <person name="DeBoy R.T."/>
            <person name="Kolonay J.F."/>
            <person name="McClarty G."/>
            <person name="Salzberg S.L."/>
            <person name="Eisen J.A."/>
            <person name="Fraser C.M."/>
        </authorList>
    </citation>
    <scope>NUCLEOTIDE SEQUENCE [LARGE SCALE GENOMIC DNA]</scope>
    <source>
        <strain>AR39</strain>
    </source>
</reference>
<reference key="3">
    <citation type="journal article" date="2000" name="Nucleic Acids Res.">
        <title>Comparison of whole genome sequences of Chlamydia pneumoniae J138 from Japan and CWL029 from USA.</title>
        <authorList>
            <person name="Shirai M."/>
            <person name="Hirakawa H."/>
            <person name="Kimoto M."/>
            <person name="Tabuchi M."/>
            <person name="Kishi F."/>
            <person name="Ouchi K."/>
            <person name="Shiba T."/>
            <person name="Ishii K."/>
            <person name="Hattori M."/>
            <person name="Kuhara S."/>
            <person name="Nakazawa T."/>
        </authorList>
    </citation>
    <scope>NUCLEOTIDE SEQUENCE [LARGE SCALE GENOMIC DNA]</scope>
    <source>
        <strain>J138</strain>
    </source>
</reference>
<reference key="4">
    <citation type="submission" date="2002-05" db="EMBL/GenBank/DDBJ databases">
        <title>The genome sequence of Chlamydia pneumoniae TW183 and comparison with other Chlamydia strains based on whole genome sequence analysis.</title>
        <authorList>
            <person name="Geng M.M."/>
            <person name="Schuhmacher A."/>
            <person name="Muehldorfer I."/>
            <person name="Bensch K.W."/>
            <person name="Schaefer K.P."/>
            <person name="Schneider S."/>
            <person name="Pohl T."/>
            <person name="Essig A."/>
            <person name="Marre R."/>
            <person name="Melchers K."/>
        </authorList>
    </citation>
    <scope>NUCLEOTIDE SEQUENCE [LARGE SCALE GENOMIC DNA]</scope>
    <source>
        <strain>TW-183</strain>
    </source>
</reference>
<organism>
    <name type="scientific">Chlamydia pneumoniae</name>
    <name type="common">Chlamydophila pneumoniae</name>
    <dbReference type="NCBI Taxonomy" id="83558"/>
    <lineage>
        <taxon>Bacteria</taxon>
        <taxon>Pseudomonadati</taxon>
        <taxon>Chlamydiota</taxon>
        <taxon>Chlamydiia</taxon>
        <taxon>Chlamydiales</taxon>
        <taxon>Chlamydiaceae</taxon>
        <taxon>Chlamydia/Chlamydophila group</taxon>
        <taxon>Chlamydia</taxon>
    </lineage>
</organism>
<feature type="chain" id="PRO_0000166400" description="Ribonuclease R">
    <location>
        <begin position="1"/>
        <end position="676"/>
    </location>
</feature>
<feature type="domain" description="RNB" evidence="1">
    <location>
        <begin position="207"/>
        <end position="527"/>
    </location>
</feature>
<feature type="domain" description="S1 motif" evidence="2">
    <location>
        <begin position="566"/>
        <end position="651"/>
    </location>
</feature>
<feature type="region of interest" description="Disordered" evidence="3">
    <location>
        <begin position="656"/>
        <end position="676"/>
    </location>
</feature>
<feature type="compositionally biased region" description="Basic residues" evidence="3">
    <location>
        <begin position="659"/>
        <end position="676"/>
    </location>
</feature>
<proteinExistence type="inferred from homology"/>
<comment type="function">
    <text evidence="2">3'-5' exoribonuclease that releases 5'-nucleoside monophosphates and is involved in maturation of structured RNAs.</text>
</comment>
<comment type="catalytic activity">
    <reaction evidence="2">
        <text>Exonucleolytic cleavage in the 3'- to 5'-direction to yield nucleoside 5'-phosphates.</text>
        <dbReference type="EC" id="3.1.13.1"/>
    </reaction>
</comment>
<comment type="subcellular location">
    <subcellularLocation>
        <location evidence="2">Cytoplasm</location>
    </subcellularLocation>
</comment>
<comment type="similarity">
    <text evidence="2">Belongs to the RNR ribonuclease family. RNase R subfamily.</text>
</comment>
<sequence length="676" mass="76354">MLKKPKRKPGRRTYGKSLKIFIPGTLFVHARKGFGFVSPDNPEEYPFDIFVPARDLRGALDGDHVIVSVLPYPRDGQKLKGTISEVLARGKTTLVGTITSLVSPTSALAYTSMSGSQSLIPVELLPGRTYKIGDRILLSTPPWVDKPQEGASPALQMLEFIGHITNAKADFQAIQAEYNLAEEFPPEVIEEASLFSQKHITQVLHSRKDLRDLLCFTIDSSTARDFDDAISLTYDHNNNYILGVHIADVSHYVTPHSHLDKEAAKRCNSTYFPGKVIPMLPSALSDNLCSLKPNVDRLAVSVFMTFTKSGHLSDYQIFRSVIRSKYRMTYDEVDNIIEKKHSHPLSKILNEMATLSKKFSDIREERGCIRFVLPSVTMSLDNLQEPVALIENHQTFSHKLIEEFMLKANEVVAYHISHQGVSLPFRSHEPPNDENLLAFQELAKNMGFDITFTPTQEPDYQYLLQTTSAGHPLEQVLHSQFVRSMKTASYSTENKGHYGLKLDYYTHFTSPIRRYIDLIVHRLLFNPLSIDQTHLEIIVRACSTKERVSAKAENSFENLKKTRFINKFLQEQPKTTYHAYIITANHEGLSFVVTEFCHEGFIAAAELPKEYSLKKNALPESIPDKMKPGASIKVTIDSVNLLTQKIVWSIATTTEDKPKKIKKTPSKKKGTKKRAS</sequence>
<protein>
    <recommendedName>
        <fullName evidence="2">Ribonuclease R</fullName>
        <shortName evidence="2">RNase R</shortName>
        <ecNumber evidence="2">3.1.13.1</ecNumber>
    </recommendedName>
    <alternativeName>
        <fullName>VacB protein homolog</fullName>
    </alternativeName>
</protein>